<organism>
    <name type="scientific">Saccharomyces cerevisiae (strain ATCC 204508 / S288c)</name>
    <name type="common">Baker's yeast</name>
    <dbReference type="NCBI Taxonomy" id="559292"/>
    <lineage>
        <taxon>Eukaryota</taxon>
        <taxon>Fungi</taxon>
        <taxon>Dikarya</taxon>
        <taxon>Ascomycota</taxon>
        <taxon>Saccharomycotina</taxon>
        <taxon>Saccharomycetes</taxon>
        <taxon>Saccharomycetales</taxon>
        <taxon>Saccharomycetaceae</taxon>
        <taxon>Saccharomyces</taxon>
    </lineage>
</organism>
<accession>P04840</accession>
<accession>D6W1C3</accession>
<dbReference type="EMBL" id="X02324">
    <property type="protein sequence ID" value="CAA26184.1"/>
    <property type="molecule type" value="mRNA"/>
</dbReference>
<dbReference type="EMBL" id="M34907">
    <property type="protein sequence ID" value="AAA35208.1"/>
    <property type="molecule type" value="mRNA"/>
</dbReference>
<dbReference type="EMBL" id="U12141">
    <property type="protein sequence ID" value="AAA99656.1"/>
    <property type="molecule type" value="Genomic_DNA"/>
</dbReference>
<dbReference type="EMBL" id="Z71331">
    <property type="protein sequence ID" value="CAA95926.1"/>
    <property type="molecule type" value="Genomic_DNA"/>
</dbReference>
<dbReference type="EMBL" id="BK006947">
    <property type="protein sequence ID" value="DAA10489.1"/>
    <property type="molecule type" value="Genomic_DNA"/>
</dbReference>
<dbReference type="PIR" id="S58721">
    <property type="entry name" value="MMBYP"/>
</dbReference>
<dbReference type="RefSeq" id="NP_014343.1">
    <property type="nucleotide sequence ID" value="NM_001182894.1"/>
</dbReference>
<dbReference type="SMR" id="P04840"/>
<dbReference type="BioGRID" id="35766">
    <property type="interactions" value="542"/>
</dbReference>
<dbReference type="DIP" id="DIP-6453N"/>
<dbReference type="FunCoup" id="P04840">
    <property type="interactions" value="1372"/>
</dbReference>
<dbReference type="IntAct" id="P04840">
    <property type="interactions" value="128"/>
</dbReference>
<dbReference type="MINT" id="P04840"/>
<dbReference type="STRING" id="4932.YNL055C"/>
<dbReference type="TCDB" id="1.B.8.1.1">
    <property type="family name" value="the mitochondrial and plastid porin (mpp) family"/>
</dbReference>
<dbReference type="iPTMnet" id="P04840"/>
<dbReference type="PaxDb" id="4932-YNL055C"/>
<dbReference type="PeptideAtlas" id="P04840"/>
<dbReference type="DNASU" id="855669"/>
<dbReference type="EnsemblFungi" id="YNL055C_mRNA">
    <property type="protein sequence ID" value="YNL055C"/>
    <property type="gene ID" value="YNL055C"/>
</dbReference>
<dbReference type="GeneID" id="855669"/>
<dbReference type="KEGG" id="sce:YNL055C"/>
<dbReference type="AGR" id="SGD:S000005000"/>
<dbReference type="SGD" id="S000005000">
    <property type="gene designation" value="POR1"/>
</dbReference>
<dbReference type="VEuPathDB" id="FungiDB:YNL055C"/>
<dbReference type="eggNOG" id="KOG3126">
    <property type="taxonomic scope" value="Eukaryota"/>
</dbReference>
<dbReference type="GeneTree" id="ENSGT00950000182869"/>
<dbReference type="HOGENOM" id="CLU_044399_0_1_1"/>
<dbReference type="InParanoid" id="P04840"/>
<dbReference type="OMA" id="KPCCSHE"/>
<dbReference type="OrthoDB" id="7827681at2759"/>
<dbReference type="BioCyc" id="YEAST:G3O-33087-MONOMER"/>
<dbReference type="Reactome" id="R-SCE-5205685">
    <property type="pathway name" value="PINK1-PRKN Mediated Mitophagy"/>
</dbReference>
<dbReference type="Reactome" id="R-SCE-70268">
    <property type="pathway name" value="Pyruvate metabolism"/>
</dbReference>
<dbReference type="BioGRID-ORCS" id="855669">
    <property type="hits" value="2 hits in 10 CRISPR screens"/>
</dbReference>
<dbReference type="CD-CODE" id="E03F929F">
    <property type="entry name" value="Stress granule"/>
</dbReference>
<dbReference type="PRO" id="PR:P04840"/>
<dbReference type="Proteomes" id="UP000002311">
    <property type="component" value="Chromosome XIV"/>
</dbReference>
<dbReference type="RNAct" id="P04840">
    <property type="molecule type" value="protein"/>
</dbReference>
<dbReference type="GO" id="GO:0005737">
    <property type="term" value="C:cytoplasm"/>
    <property type="evidence" value="ECO:0007005"/>
    <property type="project" value="SGD"/>
</dbReference>
<dbReference type="GO" id="GO:0044289">
    <property type="term" value="C:mitochondrial inner-outer membrane contact site"/>
    <property type="evidence" value="ECO:0000353"/>
    <property type="project" value="SGD"/>
</dbReference>
<dbReference type="GO" id="GO:0005758">
    <property type="term" value="C:mitochondrial intermembrane space"/>
    <property type="evidence" value="ECO:0000304"/>
    <property type="project" value="Reactome"/>
</dbReference>
<dbReference type="GO" id="GO:0005741">
    <property type="term" value="C:mitochondrial outer membrane"/>
    <property type="evidence" value="ECO:0000314"/>
    <property type="project" value="SGD"/>
</dbReference>
<dbReference type="GO" id="GO:0005739">
    <property type="term" value="C:mitochondrion"/>
    <property type="evidence" value="ECO:0000353"/>
    <property type="project" value="SGD"/>
</dbReference>
<dbReference type="GO" id="GO:0046930">
    <property type="term" value="C:pore complex"/>
    <property type="evidence" value="ECO:0007669"/>
    <property type="project" value="UniProtKB-KW"/>
</dbReference>
<dbReference type="GO" id="GO:0005524">
    <property type="term" value="F:ATP binding"/>
    <property type="evidence" value="ECO:0007669"/>
    <property type="project" value="UniProtKB-KW"/>
</dbReference>
<dbReference type="GO" id="GO:0017128">
    <property type="term" value="F:phospholipid scramblase activity"/>
    <property type="evidence" value="ECO:0000314"/>
    <property type="project" value="SGD"/>
</dbReference>
<dbReference type="GO" id="GO:0015288">
    <property type="term" value="F:porin activity"/>
    <property type="evidence" value="ECO:0007669"/>
    <property type="project" value="UniProtKB-KW"/>
</dbReference>
<dbReference type="GO" id="GO:0048039">
    <property type="term" value="F:ubiquinone binding"/>
    <property type="evidence" value="ECO:0000314"/>
    <property type="project" value="SGD"/>
</dbReference>
<dbReference type="GO" id="GO:0008308">
    <property type="term" value="F:voltage-gated monoatomic anion channel activity"/>
    <property type="evidence" value="ECO:0000314"/>
    <property type="project" value="SGD"/>
</dbReference>
<dbReference type="GO" id="GO:0006915">
    <property type="term" value="P:apoptotic process"/>
    <property type="evidence" value="ECO:0000315"/>
    <property type="project" value="SGD"/>
</dbReference>
<dbReference type="GO" id="GO:0045454">
    <property type="term" value="P:cell redox homeostasis"/>
    <property type="evidence" value="ECO:0000315"/>
    <property type="project" value="SGD"/>
</dbReference>
<dbReference type="GO" id="GO:0051027">
    <property type="term" value="P:DNA transport"/>
    <property type="evidence" value="ECO:0000315"/>
    <property type="project" value="SGD"/>
</dbReference>
<dbReference type="GO" id="GO:0007005">
    <property type="term" value="P:mitochondrion organization"/>
    <property type="evidence" value="ECO:0000315"/>
    <property type="project" value="SGD"/>
</dbReference>
<dbReference type="GO" id="GO:0006811">
    <property type="term" value="P:monoatomic ion transport"/>
    <property type="evidence" value="ECO:0000314"/>
    <property type="project" value="SGD"/>
</dbReference>
<dbReference type="GO" id="GO:0045332">
    <property type="term" value="P:phospholipid translocation"/>
    <property type="evidence" value="ECO:0000315"/>
    <property type="project" value="SGD"/>
</dbReference>
<dbReference type="GO" id="GO:0042307">
    <property type="term" value="P:positive regulation of protein import into nucleus"/>
    <property type="evidence" value="ECO:0000315"/>
    <property type="project" value="SGD"/>
</dbReference>
<dbReference type="CDD" id="cd07306">
    <property type="entry name" value="Porin3_VDAC"/>
    <property type="match status" value="1"/>
</dbReference>
<dbReference type="FunFam" id="2.40.160.10:FF:000016">
    <property type="entry name" value="Por1p"/>
    <property type="match status" value="1"/>
</dbReference>
<dbReference type="Gene3D" id="2.40.160.10">
    <property type="entry name" value="Porin"/>
    <property type="match status" value="1"/>
</dbReference>
<dbReference type="InterPro" id="IPR023614">
    <property type="entry name" value="Porin_dom_sf"/>
</dbReference>
<dbReference type="InterPro" id="IPR001925">
    <property type="entry name" value="Porin_Euk"/>
</dbReference>
<dbReference type="InterPro" id="IPR027246">
    <property type="entry name" value="Porin_Euk/Tom40"/>
</dbReference>
<dbReference type="PANTHER" id="PTHR11743:SF70">
    <property type="entry name" value="GH26960P-RELATED"/>
    <property type="match status" value="1"/>
</dbReference>
<dbReference type="PANTHER" id="PTHR11743">
    <property type="entry name" value="VOLTAGE-DEPENDENT ANION-SELECTIVE CHANNEL"/>
    <property type="match status" value="1"/>
</dbReference>
<dbReference type="Pfam" id="PF01459">
    <property type="entry name" value="Porin_3"/>
    <property type="match status" value="1"/>
</dbReference>
<dbReference type="PRINTS" id="PR00185">
    <property type="entry name" value="EUKARYTPORIN"/>
</dbReference>
<dbReference type="PROSITE" id="PS00558">
    <property type="entry name" value="EUKARYOTIC_PORIN"/>
    <property type="match status" value="1"/>
</dbReference>
<sequence length="283" mass="30428">MSPPVYSDISRNINDLLNKDFYHATPAAFDVQTTTANGIKFSLKAKQPVKDGPLSTNVEAKLNDKQTGLGLTQGWSNTNNLQTKLEFANLTPGLKNELITSLTPGVAKSAVLNTTFTQPFFTARGAFDLCLKSPTFVGDLTMAHEGIVGGAEFGYDISAGSISRYAMALSYFAKDYSLGATLNNEQITTVDFFQNVNAFLQVGAKATMNCKLPNSNVNIEFATRYLPDASSQVKAKVSDSGIVTLAYKQLLRPGVTLGVGSSFDALKLSEPVHKLGWSLSFDA</sequence>
<name>VDAC1_YEAST</name>
<comment type="function">
    <text evidence="6">Non-selective voltage-gated ion channel that mediates the transport of anions and cations through the mitochondrion outer membrane (PubMed:9435273). The channel adopts an open conformation at low or zero membrane potential and a closed conformation at potentials above 30-40 mV (PubMed:9435273). The open state has a weak anion selectivity whereas the closed state is cation-selective (PubMed:9435273). Is the major permeability factor of the mitochondrial outer membrane (PubMed:9435273).</text>
</comment>
<comment type="function">
    <text evidence="4">Catalyzes the scrambling of phospholipids across the outer mitochondrial membrane; the mechanism is unrelated to channel activity and is capable of translocating both anionic and zwitterionic phospholipids.</text>
</comment>
<comment type="subunit">
    <text evidence="2 4">Homodimer (PubMed:38065946). Interacts with FCJ1 (PubMed:21987634). Interacts with AIM5 (PubMed:21987634). Interacts (PubMed:21987634).</text>
</comment>
<comment type="subcellular location">
    <subcellularLocation>
        <location evidence="5 10">Mitochondrion outer membrane</location>
    </subcellularLocation>
</comment>
<comment type="domain">
    <text>Consists mainly of membrane-spanning sided beta-sheets. 19 strands distributed along the entire VDAC protein, have the potential to adopt transmembrane beta pleated sheet structures, which rolled together may form a 'beta-barrel' type structure, possessing pore dimensions.</text>
</comment>
<comment type="similarity">
    <text evidence="9">Belongs to the eukaryotic mitochondrial porin family.</text>
</comment>
<reference key="1">
    <citation type="journal article" date="1985" name="EMBO J.">
        <title>Molecular cloning and sequencing of cDNA for yeast porin, an outer mitochondrial membrane protein: a search for targeting signal in the primary structure.</title>
        <authorList>
            <person name="Mihara K."/>
            <person name="Sato R."/>
        </authorList>
    </citation>
    <scope>NUCLEOTIDE SEQUENCE [MRNA]</scope>
</reference>
<reference key="2">
    <citation type="journal article" date="1987" name="J. Bioenerg. Biomembr.">
        <title>Molecular genetics of the VDAC ion channel: structural model and sequence analysis.</title>
        <authorList>
            <person name="Forte M.A."/>
            <person name="Guy H.R."/>
            <person name="Mannella C.A."/>
        </authorList>
    </citation>
    <scope>NUCLEOTIDE SEQUENCE [MRNA]</scope>
</reference>
<reference key="3">
    <citation type="journal article" date="1995" name="Yeast">
        <title>The sequence of a 44 420 bp fragment located on the left arm of chromosome XIV from Saccharomyces cerevisiae.</title>
        <authorList>
            <person name="Bergez P."/>
            <person name="Doignon F."/>
            <person name="Crouzet M."/>
        </authorList>
    </citation>
    <scope>NUCLEOTIDE SEQUENCE [GENOMIC DNA]</scope>
    <source>
        <strain>S288c / FY1676</strain>
    </source>
</reference>
<reference key="4">
    <citation type="journal article" date="1996" name="Yeast">
        <authorList>
            <person name="Bergez P."/>
            <person name="Doignon F."/>
            <person name="Crouzet M."/>
        </authorList>
    </citation>
    <scope>ERRATUM OF PUBMED:8533472</scope>
</reference>
<reference key="5">
    <citation type="journal article" date="1997" name="Nature">
        <title>The nucleotide sequence of Saccharomyces cerevisiae chromosome XIV and its evolutionary implications.</title>
        <authorList>
            <person name="Philippsen P."/>
            <person name="Kleine K."/>
            <person name="Poehlmann R."/>
            <person name="Duesterhoeft A."/>
            <person name="Hamberg K."/>
            <person name="Hegemann J.H."/>
            <person name="Obermaier B."/>
            <person name="Urrestarazu L.A."/>
            <person name="Aert R."/>
            <person name="Albermann K."/>
            <person name="Altmann R."/>
            <person name="Andre B."/>
            <person name="Baladron V."/>
            <person name="Ballesta J.P.G."/>
            <person name="Becam A.-M."/>
            <person name="Beinhauer J.D."/>
            <person name="Boskovic J."/>
            <person name="Buitrago M.J."/>
            <person name="Bussereau F."/>
            <person name="Coster F."/>
            <person name="Crouzet M."/>
            <person name="D'Angelo M."/>
            <person name="Dal Pero F."/>
            <person name="De Antoni A."/>
            <person name="del Rey F."/>
            <person name="Doignon F."/>
            <person name="Domdey H."/>
            <person name="Dubois E."/>
            <person name="Fiedler T.A."/>
            <person name="Fleig U."/>
            <person name="Floeth M."/>
            <person name="Fritz C."/>
            <person name="Gaillardin C."/>
            <person name="Garcia-Cantalejo J.M."/>
            <person name="Glansdorff N."/>
            <person name="Goffeau A."/>
            <person name="Gueldener U."/>
            <person name="Herbert C.J."/>
            <person name="Heumann K."/>
            <person name="Heuss-Neitzel D."/>
            <person name="Hilbert H."/>
            <person name="Hinni K."/>
            <person name="Iraqui Houssaini I."/>
            <person name="Jacquet M."/>
            <person name="Jimenez A."/>
            <person name="Jonniaux J.-L."/>
            <person name="Karpfinger-Hartl L."/>
            <person name="Lanfranchi G."/>
            <person name="Lepingle A."/>
            <person name="Levesque H."/>
            <person name="Lyck R."/>
            <person name="Maftahi M."/>
            <person name="Mallet L."/>
            <person name="Maurer C.T.C."/>
            <person name="Messenguy F."/>
            <person name="Mewes H.-W."/>
            <person name="Moestl D."/>
            <person name="Nasr F."/>
            <person name="Nicaud J.-M."/>
            <person name="Niedenthal R.K."/>
            <person name="Pandolfo D."/>
            <person name="Pierard A."/>
            <person name="Piravandi E."/>
            <person name="Planta R.J."/>
            <person name="Pohl T.M."/>
            <person name="Purnelle B."/>
            <person name="Rebischung C."/>
            <person name="Remacha M.A."/>
            <person name="Revuelta J.L."/>
            <person name="Rinke M."/>
            <person name="Saiz J.E."/>
            <person name="Sartorello F."/>
            <person name="Scherens B."/>
            <person name="Sen-Gupta M."/>
            <person name="Soler-Mira A."/>
            <person name="Urbanus J.H.M."/>
            <person name="Valle G."/>
            <person name="Van Dyck L."/>
            <person name="Verhasselt P."/>
            <person name="Vierendeels F."/>
            <person name="Vissers S."/>
            <person name="Voet M."/>
            <person name="Volckaert G."/>
            <person name="Wach A."/>
            <person name="Wambutt R."/>
            <person name="Wedler H."/>
            <person name="Zollner A."/>
            <person name="Hani J."/>
        </authorList>
    </citation>
    <scope>NUCLEOTIDE SEQUENCE [LARGE SCALE GENOMIC DNA]</scope>
    <source>
        <strain>ATCC 204508 / S288c</strain>
    </source>
</reference>
<reference key="6">
    <citation type="journal article" date="2014" name="G3 (Bethesda)">
        <title>The reference genome sequence of Saccharomyces cerevisiae: Then and now.</title>
        <authorList>
            <person name="Engel S.R."/>
            <person name="Dietrich F.S."/>
            <person name="Fisk D.G."/>
            <person name="Binkley G."/>
            <person name="Balakrishnan R."/>
            <person name="Costanzo M.C."/>
            <person name="Dwight S.S."/>
            <person name="Hitz B.C."/>
            <person name="Karra K."/>
            <person name="Nash R.S."/>
            <person name="Weng S."/>
            <person name="Wong E.D."/>
            <person name="Lloyd P."/>
            <person name="Skrzypek M.S."/>
            <person name="Miyasato S.R."/>
            <person name="Simison M."/>
            <person name="Cherry J.M."/>
        </authorList>
    </citation>
    <scope>GENOME REANNOTATION</scope>
    <source>
        <strain>ATCC 204508 / S288c</strain>
    </source>
</reference>
<reference key="7">
    <citation type="submission" date="2005-05" db="UniProtKB">
        <authorList>
            <person name="Bienvenut W.V."/>
            <person name="Peters C."/>
        </authorList>
    </citation>
    <scope>PROTEIN SEQUENCE OF 2-40; 45-108; 125-132; 165-174; 206-234 AND 237-274</scope>
    <scope>CLEAVAGE OF INITIATOR METHIONINE</scope>
    <scope>IDENTIFICATION BY MASS SPECTROMETRY</scope>
</reference>
<reference key="8">
    <citation type="journal article" date="1989" name="J. Bioenerg. Biomembr.">
        <title>Probing the structure of the mitochondrial channel, VDAC, by site-directed mutagenesis: a progress report.</title>
        <authorList>
            <person name="Blachly-Dyson E."/>
            <person name="Peng S.Z."/>
            <person name="Colombini M."/>
            <person name="Forte M.A."/>
        </authorList>
    </citation>
    <scope>MUTAGENESIS OF LYS-61</scope>
</reference>
<reference key="9">
    <citation type="journal article" date="1991" name="Biophys. J.">
        <title>Probing for the voltage sensor of the VDAC ion channel by site-directed mutagenesis.</title>
        <authorList>
            <person name="Thomas L."/>
            <person name="Blachly-Dyson E."/>
            <person name="Colombini M."/>
            <person name="Forte M.A."/>
        </authorList>
    </citation>
    <scope>MUTAGENESIS OF LYS-19 AND ASP-51</scope>
</reference>
<reference key="10">
    <citation type="journal article" date="1995" name="J. Biol. Chem.">
        <title>Lysine residues at positions 234 and 236 in yeast porin are involved in its assembly into the mitochondrial outer membrane.</title>
        <authorList>
            <person name="Smith M.D."/>
            <person name="Petrak M."/>
            <person name="Boucher P.D."/>
            <person name="Barton K.N."/>
            <person name="Carter L."/>
            <person name="Reddy G."/>
            <person name="Blachly-Dyson E."/>
            <person name="Forte M."/>
            <person name="Price J."/>
            <person name="Verner K."/>
        </authorList>
    </citation>
    <scope>SUBCELLULAR LOCATION</scope>
    <scope>MUTAGENESIS OF LYS-234</scope>
</reference>
<reference key="11">
    <citation type="journal article" date="1998" name="J. Membr. Biol.">
        <title>The role of yeast VDAC genes on the permeability of the mitochondrial outer membrane.</title>
        <authorList>
            <person name="Lee A.C."/>
            <person name="Xu X."/>
            <person name="Blachly-Dyson E."/>
            <person name="Forte M.A."/>
            <person name="Colombini M."/>
        </authorList>
    </citation>
    <scope>FUNCTION</scope>
</reference>
<reference key="12">
    <citation type="journal article" date="2007" name="Mol. Cell. Proteomics">
        <title>Profiling phosphoproteins of yeast mitochondria reveals a role of phosphorylation in assembly of the ATP synthase.</title>
        <authorList>
            <person name="Reinders J."/>
            <person name="Wagner K."/>
            <person name="Zahedi R.P."/>
            <person name="Stojanovski D."/>
            <person name="Eyrich B."/>
            <person name="van der Laan M."/>
            <person name="Rehling P."/>
            <person name="Sickmann A."/>
            <person name="Pfanner N."/>
            <person name="Meisinger C."/>
        </authorList>
    </citation>
    <scope>PHOSPHORYLATION [LARGE SCALE ANALYSIS] AT SER-109</scope>
    <scope>IDENTIFICATION BY MASS SPECTROMETRY [LARGE SCALE ANALYSIS]</scope>
    <source>
        <strain>ATCC 76625 / YPH499</strain>
    </source>
</reference>
<reference key="13">
    <citation type="journal article" date="2008" name="Mol. Cell. Proteomics">
        <title>A multidimensional chromatography technology for in-depth phosphoproteome analysis.</title>
        <authorList>
            <person name="Albuquerque C.P."/>
            <person name="Smolka M.B."/>
            <person name="Payne S.H."/>
            <person name="Bafna V."/>
            <person name="Eng J."/>
            <person name="Zhou H."/>
        </authorList>
    </citation>
    <scope>PHOSPHORYLATION [LARGE SCALE ANALYSIS] AT THR-117</scope>
    <scope>IDENTIFICATION BY MASS SPECTROMETRY [LARGE SCALE ANALYSIS]</scope>
</reference>
<reference key="14">
    <citation type="journal article" date="2009" name="Science">
        <title>Global analysis of Cdk1 substrate phosphorylation sites provides insights into evolution.</title>
        <authorList>
            <person name="Holt L.J."/>
            <person name="Tuch B.B."/>
            <person name="Villen J."/>
            <person name="Johnson A.D."/>
            <person name="Gygi S.P."/>
            <person name="Morgan D.O."/>
        </authorList>
    </citation>
    <scope>PHOSPHORYLATION [LARGE SCALE ANALYSIS] AT SER-109</scope>
    <scope>IDENTIFICATION BY MASS SPECTROMETRY [LARGE SCALE ANALYSIS]</scope>
</reference>
<reference key="15">
    <citation type="journal article" date="2011" name="J. Cell Biol.">
        <title>A mitochondrial-focused genetic interaction map reveals a scaffold-like complex required for inner membrane organization in mitochondria.</title>
        <authorList>
            <person name="Hoppins S."/>
            <person name="Collins S.R."/>
            <person name="Cassidy-Stone A."/>
            <person name="Hummel E."/>
            <person name="Devay R.M."/>
            <person name="Lackner L.L."/>
            <person name="Westermann B."/>
            <person name="Schuldiner M."/>
            <person name="Weissman J.S."/>
            <person name="Nunnari J."/>
        </authorList>
    </citation>
    <scope>INTERACTION WITH AIM5; FCJ1 AND MOS1</scope>
</reference>
<reference key="16">
    <citation type="journal article" date="2012" name="Proc. Natl. Acad. Sci. U.S.A.">
        <title>N-terminal acetylome analyses and functional insights of the N-terminal acetyltransferase NatB.</title>
        <authorList>
            <person name="Van Damme P."/>
            <person name="Lasa M."/>
            <person name="Polevoda B."/>
            <person name="Gazquez C."/>
            <person name="Elosegui-Artola A."/>
            <person name="Kim D.S."/>
            <person name="De Juan-Pardo E."/>
            <person name="Demeyer K."/>
            <person name="Hole K."/>
            <person name="Larrea E."/>
            <person name="Timmerman E."/>
            <person name="Prieto J."/>
            <person name="Arnesen T."/>
            <person name="Sherman F."/>
            <person name="Gevaert K."/>
            <person name="Aldabe R."/>
        </authorList>
    </citation>
    <scope>IDENTIFICATION BY MASS SPECTROMETRY [LARGE SCALE ANALYSIS]</scope>
</reference>
<reference key="17">
    <citation type="journal article" date="2023" name="Nat. Commun.">
        <title>Phospholipids are imported into mitochondria by VDAC, a dimeric beta barrel scramblase.</title>
        <authorList>
            <person name="Jahn H."/>
            <person name="Bartos L."/>
            <person name="Dearden G.I."/>
            <person name="Dittman J.S."/>
            <person name="Holthuis J.C.M."/>
            <person name="Vacha R."/>
            <person name="Menon A.K."/>
        </authorList>
    </citation>
    <scope>FUNCTION</scope>
    <scope>SUBUNIT</scope>
    <scope>SUBCELLULAR LOCATION</scope>
</reference>
<feature type="initiator methionine" description="Removed" evidence="7">
    <location>
        <position position="1"/>
    </location>
</feature>
<feature type="chain" id="PRO_0000050524" description="Non-selective voltage-gated ion channel 1">
    <location>
        <begin position="2"/>
        <end position="283"/>
    </location>
</feature>
<feature type="binding site" evidence="1">
    <location>
        <position position="11"/>
    </location>
    <ligand>
        <name>ATP</name>
        <dbReference type="ChEBI" id="CHEBI:30616"/>
    </ligand>
</feature>
<feature type="binding site" evidence="1">
    <location>
        <position position="19"/>
    </location>
    <ligand>
        <name>ATP</name>
        <dbReference type="ChEBI" id="CHEBI:30616"/>
    </ligand>
</feature>
<feature type="modified residue" description="Phosphoserine" evidence="11 13">
    <location>
        <position position="109"/>
    </location>
</feature>
<feature type="modified residue" description="Phosphothreonine" evidence="12">
    <location>
        <position position="117"/>
    </location>
</feature>
<feature type="mutagenesis site" description="2.5-fold reduction in steepness of voltage dependence." evidence="8">
    <original>K</original>
    <variation>E</variation>
    <location>
        <position position="19"/>
    </location>
</feature>
<feature type="mutagenesis site" description="2-fold increase in steepness of voltage dependence." evidence="8">
    <original>D</original>
    <variation>K</variation>
    <location>
        <position position="51"/>
    </location>
</feature>
<feature type="mutagenesis site" description="Alters the selectivity of VDAC." evidence="3">
    <original>K</original>
    <variation>E</variation>
    <location>
        <position position="61"/>
    </location>
</feature>
<feature type="mutagenesis site" description="Hinders insertion into the mitochondrial membrane." evidence="5">
    <original>K</original>
    <variation>E</variation>
    <location>
        <position position="234"/>
    </location>
</feature>
<feature type="sequence conflict" description="In Ref. 1; CAA26184 and 2; AAA35208." evidence="9" ref="1 2">
    <original>Q</original>
    <variation>E</variation>
    <location>
        <position position="118"/>
    </location>
</feature>
<feature type="sequence conflict" description="In Ref. 2; AAA35208." evidence="9" ref="2">
    <original>GAKAT</original>
    <variation>AKATM</variation>
    <location>
        <begin position="203"/>
        <end position="207"/>
    </location>
</feature>
<gene>
    <name type="primary">POR1</name>
    <name type="synonym">OMP2</name>
    <name type="synonym">VDAC1</name>
    <name type="ordered locus">YNL055C</name>
    <name type="ORF">N2441</name>
    <name type="ORF">YNL2441C</name>
</gene>
<keyword id="KW-0067">ATP-binding</keyword>
<keyword id="KW-0903">Direct protein sequencing</keyword>
<keyword id="KW-0406">Ion transport</keyword>
<keyword id="KW-0445">Lipid transport</keyword>
<keyword id="KW-0472">Membrane</keyword>
<keyword id="KW-0496">Mitochondrion</keyword>
<keyword id="KW-1000">Mitochondrion outer membrane</keyword>
<keyword id="KW-0547">Nucleotide-binding</keyword>
<keyword id="KW-0597">Phosphoprotein</keyword>
<keyword id="KW-0626">Porin</keyword>
<keyword id="KW-1185">Reference proteome</keyword>
<keyword id="KW-0812">Transmembrane</keyword>
<keyword id="KW-1134">Transmembrane beta strand</keyword>
<keyword id="KW-0813">Transport</keyword>
<proteinExistence type="evidence at protein level"/>
<protein>
    <recommendedName>
        <fullName evidence="9">Non-selective voltage-gated ion channel 1</fullName>
    </recommendedName>
    <alternativeName>
        <fullName evidence="9">Outer mitochondrial membrane protein porin 1</fullName>
    </alternativeName>
    <alternativeName>
        <fullName>Voltage-dependent anion-selective channel protein 1</fullName>
        <shortName>VDAC-1</shortName>
    </alternativeName>
</protein>
<evidence type="ECO:0000250" key="1">
    <source>
        <dbReference type="UniProtKB" id="Q60932"/>
    </source>
</evidence>
<evidence type="ECO:0000269" key="2">
    <source>
    </source>
</evidence>
<evidence type="ECO:0000269" key="3">
    <source>
    </source>
</evidence>
<evidence type="ECO:0000269" key="4">
    <source>
    </source>
</evidence>
<evidence type="ECO:0000269" key="5">
    <source>
    </source>
</evidence>
<evidence type="ECO:0000269" key="6">
    <source>
    </source>
</evidence>
<evidence type="ECO:0000269" key="7">
    <source ref="7"/>
</evidence>
<evidence type="ECO:0000269" key="8">
    <source ref="9"/>
</evidence>
<evidence type="ECO:0000305" key="9"/>
<evidence type="ECO:0000305" key="10">
    <source>
    </source>
</evidence>
<evidence type="ECO:0007744" key="11">
    <source>
    </source>
</evidence>
<evidence type="ECO:0007744" key="12">
    <source>
    </source>
</evidence>
<evidence type="ECO:0007744" key="13">
    <source>
    </source>
</evidence>